<sequence>MPRPTKFRRVEFFPENNYFVPWGKPKCEIHEVVLKVEELEAMRLKDIEELNQEQCAEKMEISRQTFQNIIDSARKKVAIALTEGKAIKISGGHYTTKLCKLKCIDCEEIYEINYEQDRHLCPNCGSEKVICNKKADFCRRWCKGQNRKEQYEESKNK</sequence>
<accession>C1FLM3</accession>
<gene>
    <name type="ordered locus">CLM_1546</name>
</gene>
<reference key="1">
    <citation type="submission" date="2008-10" db="EMBL/GenBank/DDBJ databases">
        <title>Genome sequence of Clostridium botulinum A2 Kyoto.</title>
        <authorList>
            <person name="Shrivastava S."/>
            <person name="Brinkac L.M."/>
            <person name="Brown J.L."/>
            <person name="Bruce D."/>
            <person name="Detter C.C."/>
            <person name="Johnson E.A."/>
            <person name="Munk C.A."/>
            <person name="Smith L.A."/>
            <person name="Smith T.J."/>
            <person name="Sutton G."/>
            <person name="Brettin T.S."/>
        </authorList>
    </citation>
    <scope>NUCLEOTIDE SEQUENCE [LARGE SCALE GENOMIC DNA]</scope>
    <source>
        <strain>Kyoto / Type A2</strain>
    </source>
</reference>
<proteinExistence type="inferred from homology"/>
<name>Y1546_CLOBJ</name>
<dbReference type="EMBL" id="CP001581">
    <property type="protein sequence ID" value="ACO86672.1"/>
    <property type="molecule type" value="Genomic_DNA"/>
</dbReference>
<dbReference type="RefSeq" id="WP_003358683.1">
    <property type="nucleotide sequence ID" value="NC_012563.1"/>
</dbReference>
<dbReference type="KEGG" id="cby:CLM_1546"/>
<dbReference type="eggNOG" id="COG1342">
    <property type="taxonomic scope" value="Bacteria"/>
</dbReference>
<dbReference type="HOGENOM" id="CLU_094511_0_1_9"/>
<dbReference type="Proteomes" id="UP000001374">
    <property type="component" value="Chromosome"/>
</dbReference>
<dbReference type="HAMAP" id="MF_00674">
    <property type="entry name" value="UPF0251"/>
    <property type="match status" value="1"/>
</dbReference>
<dbReference type="InterPro" id="IPR013324">
    <property type="entry name" value="RNA_pol_sigma_r3/r4-like"/>
</dbReference>
<dbReference type="InterPro" id="IPR002852">
    <property type="entry name" value="UPF0251"/>
</dbReference>
<dbReference type="PANTHER" id="PTHR37478">
    <property type="match status" value="1"/>
</dbReference>
<dbReference type="PANTHER" id="PTHR37478:SF2">
    <property type="entry name" value="UPF0251 PROTEIN TK0562"/>
    <property type="match status" value="1"/>
</dbReference>
<dbReference type="Pfam" id="PF02001">
    <property type="entry name" value="DUF134"/>
    <property type="match status" value="1"/>
</dbReference>
<dbReference type="SUPFAM" id="SSF88659">
    <property type="entry name" value="Sigma3 and sigma4 domains of RNA polymerase sigma factors"/>
    <property type="match status" value="1"/>
</dbReference>
<evidence type="ECO:0000255" key="1">
    <source>
        <dbReference type="HAMAP-Rule" id="MF_00674"/>
    </source>
</evidence>
<protein>
    <recommendedName>
        <fullName evidence="1">UPF0251 protein CLM_1546</fullName>
    </recommendedName>
</protein>
<feature type="chain" id="PRO_1000147681" description="UPF0251 protein CLM_1546">
    <location>
        <begin position="1"/>
        <end position="157"/>
    </location>
</feature>
<organism>
    <name type="scientific">Clostridium botulinum (strain Kyoto / Type A2)</name>
    <dbReference type="NCBI Taxonomy" id="536232"/>
    <lineage>
        <taxon>Bacteria</taxon>
        <taxon>Bacillati</taxon>
        <taxon>Bacillota</taxon>
        <taxon>Clostridia</taxon>
        <taxon>Eubacteriales</taxon>
        <taxon>Clostridiaceae</taxon>
        <taxon>Clostridium</taxon>
    </lineage>
</organism>
<comment type="similarity">
    <text evidence="1">Belongs to the UPF0251 family.</text>
</comment>